<dbReference type="EC" id="2.7.1.5" evidence="1"/>
<dbReference type="EMBL" id="CU928161">
    <property type="protein sequence ID" value="CAR05534.1"/>
    <property type="molecule type" value="Genomic_DNA"/>
</dbReference>
<dbReference type="RefSeq" id="WP_000144110.1">
    <property type="nucleotide sequence ID" value="NC_011742.1"/>
</dbReference>
<dbReference type="SMR" id="B7MI36"/>
<dbReference type="KEGG" id="ecz:ECS88_4351"/>
<dbReference type="HOGENOM" id="CLU_039395_0_0_6"/>
<dbReference type="UniPathway" id="UPA00541">
    <property type="reaction ID" value="UER00602"/>
</dbReference>
<dbReference type="Proteomes" id="UP000000747">
    <property type="component" value="Chromosome"/>
</dbReference>
<dbReference type="GO" id="GO:0005829">
    <property type="term" value="C:cytosol"/>
    <property type="evidence" value="ECO:0007669"/>
    <property type="project" value="TreeGrafter"/>
</dbReference>
<dbReference type="GO" id="GO:0005524">
    <property type="term" value="F:ATP binding"/>
    <property type="evidence" value="ECO:0007669"/>
    <property type="project" value="UniProtKB-KW"/>
</dbReference>
<dbReference type="GO" id="GO:0004370">
    <property type="term" value="F:glycerol kinase activity"/>
    <property type="evidence" value="ECO:0007669"/>
    <property type="project" value="TreeGrafter"/>
</dbReference>
<dbReference type="GO" id="GO:0008993">
    <property type="term" value="F:rhamnulokinase activity"/>
    <property type="evidence" value="ECO:0007669"/>
    <property type="project" value="UniProtKB-UniRule"/>
</dbReference>
<dbReference type="GO" id="GO:0006071">
    <property type="term" value="P:glycerol metabolic process"/>
    <property type="evidence" value="ECO:0007669"/>
    <property type="project" value="TreeGrafter"/>
</dbReference>
<dbReference type="GO" id="GO:0019301">
    <property type="term" value="P:rhamnose catabolic process"/>
    <property type="evidence" value="ECO:0007669"/>
    <property type="project" value="UniProtKB-UniRule"/>
</dbReference>
<dbReference type="CDD" id="cd07771">
    <property type="entry name" value="ASKHA_NBD_FGGY_RhaB-like"/>
    <property type="match status" value="1"/>
</dbReference>
<dbReference type="FunFam" id="3.30.420.40:FF:000064">
    <property type="entry name" value="Rhamnulokinase"/>
    <property type="match status" value="1"/>
</dbReference>
<dbReference type="FunFam" id="3.30.420.40:FF:000073">
    <property type="entry name" value="Rhamnulokinase"/>
    <property type="match status" value="1"/>
</dbReference>
<dbReference type="Gene3D" id="3.30.420.40">
    <property type="match status" value="2"/>
</dbReference>
<dbReference type="HAMAP" id="MF_01535">
    <property type="entry name" value="Rhamnulokinase"/>
    <property type="match status" value="1"/>
</dbReference>
<dbReference type="InterPro" id="IPR043129">
    <property type="entry name" value="ATPase_NBD"/>
</dbReference>
<dbReference type="InterPro" id="IPR018485">
    <property type="entry name" value="FGGY_C"/>
</dbReference>
<dbReference type="InterPro" id="IPR018484">
    <property type="entry name" value="FGGY_N"/>
</dbReference>
<dbReference type="InterPro" id="IPR013449">
    <property type="entry name" value="Rhamnulokinase"/>
</dbReference>
<dbReference type="NCBIfam" id="NF007925">
    <property type="entry name" value="PRK10640.1"/>
    <property type="match status" value="1"/>
</dbReference>
<dbReference type="NCBIfam" id="TIGR02627">
    <property type="entry name" value="rhamnulo_kin"/>
    <property type="match status" value="1"/>
</dbReference>
<dbReference type="PANTHER" id="PTHR10196:SF93">
    <property type="entry name" value="L-RHAMNULOKINASE"/>
    <property type="match status" value="1"/>
</dbReference>
<dbReference type="PANTHER" id="PTHR10196">
    <property type="entry name" value="SUGAR KINASE"/>
    <property type="match status" value="1"/>
</dbReference>
<dbReference type="Pfam" id="PF02782">
    <property type="entry name" value="FGGY_C"/>
    <property type="match status" value="1"/>
</dbReference>
<dbReference type="Pfam" id="PF00370">
    <property type="entry name" value="FGGY_N"/>
    <property type="match status" value="1"/>
</dbReference>
<dbReference type="SUPFAM" id="SSF53067">
    <property type="entry name" value="Actin-like ATPase domain"/>
    <property type="match status" value="2"/>
</dbReference>
<name>RHAB_ECO45</name>
<accession>B7MI36</accession>
<keyword id="KW-0067">ATP-binding</keyword>
<keyword id="KW-1015">Disulfide bond</keyword>
<keyword id="KW-0418">Kinase</keyword>
<keyword id="KW-0460">Magnesium</keyword>
<keyword id="KW-0547">Nucleotide-binding</keyword>
<keyword id="KW-1185">Reference proteome</keyword>
<keyword id="KW-0684">Rhamnose metabolism</keyword>
<keyword id="KW-0808">Transferase</keyword>
<comment type="function">
    <text evidence="1">Involved in the catabolism of L-rhamnose (6-deoxy-L-mannose). Catalyzes the transfer of the gamma-phosphate group from ATP to the 1-hydroxyl group of L-rhamnulose to yield L-rhamnulose 1-phosphate.</text>
</comment>
<comment type="catalytic activity">
    <reaction evidence="1">
        <text>L-rhamnulose + ATP = L-rhamnulose 1-phosphate + ADP + H(+)</text>
        <dbReference type="Rhea" id="RHEA:20117"/>
        <dbReference type="ChEBI" id="CHEBI:15378"/>
        <dbReference type="ChEBI" id="CHEBI:17897"/>
        <dbReference type="ChEBI" id="CHEBI:30616"/>
        <dbReference type="ChEBI" id="CHEBI:58313"/>
        <dbReference type="ChEBI" id="CHEBI:456216"/>
        <dbReference type="EC" id="2.7.1.5"/>
    </reaction>
</comment>
<comment type="cofactor">
    <cofactor evidence="1">
        <name>Mg(2+)</name>
        <dbReference type="ChEBI" id="CHEBI:18420"/>
    </cofactor>
</comment>
<comment type="pathway">
    <text evidence="1">Carbohydrate degradation; L-rhamnose degradation; glycerone phosphate from L-rhamnose: step 2/3.</text>
</comment>
<comment type="subunit">
    <text evidence="1">Monomer.</text>
</comment>
<comment type="similarity">
    <text evidence="1">Belongs to the rhamnulokinase family.</text>
</comment>
<proteinExistence type="inferred from homology"/>
<evidence type="ECO:0000255" key="1">
    <source>
        <dbReference type="HAMAP-Rule" id="MF_01535"/>
    </source>
</evidence>
<organism>
    <name type="scientific">Escherichia coli O45:K1 (strain S88 / ExPEC)</name>
    <dbReference type="NCBI Taxonomy" id="585035"/>
    <lineage>
        <taxon>Bacteria</taxon>
        <taxon>Pseudomonadati</taxon>
        <taxon>Pseudomonadota</taxon>
        <taxon>Gammaproteobacteria</taxon>
        <taxon>Enterobacterales</taxon>
        <taxon>Enterobacteriaceae</taxon>
        <taxon>Escherichia</taxon>
    </lineage>
</organism>
<sequence length="489" mass="54076">MTFRNCVAVDLGASSGRVMLARYERECRSLTLREIHRFNNGLHSQNGYVTWNVDSLESAIRLGLNKVCEEGIRIDSIGIDTWGVDFVLLDQQGQRVGLPVAYRDSRTNGLMAQAQQQLGKRDIYQRSGIQFLPFNTIYQLRALTEQQPELIPHIAHALLIPDYFSYRLTGKMNWEYTNATTTQLVNINSDDWDESLLAWSGANKAWFGRPTHPGNVIGHWICPQGNEIPVVAVASHDTASAVIASPLNGSRAAYLSSGTWSLMGFESQTPFTNDTALAANITNEGGAEGRYRVLKNIMGLWLLQRVLQERQINDLPALIAATQALPACRFIINPNDDRFINPDEMCSEIQAACRETAQPIPESDAELARCIFDSLALLYADVLHELAQLRGEDFSQLHIVGGGCQNTLLNQLCADACGIRVIAGPVEASTLGNIGIQLMTLDELNNVDDFRQVVSTTANLTTFTPNPDSEIAHYVAQIHSTRQTKELCA</sequence>
<protein>
    <recommendedName>
        <fullName evidence="1">Rhamnulokinase</fullName>
        <shortName evidence="1">RhaB</shortName>
        <ecNumber evidence="1">2.7.1.5</ecNumber>
    </recommendedName>
    <alternativeName>
        <fullName evidence="1">ATP:L-rhamnulose phosphotransferase</fullName>
    </alternativeName>
    <alternativeName>
        <fullName evidence="1">L-rhamnulose 1-kinase</fullName>
    </alternativeName>
    <alternativeName>
        <fullName evidence="1">Rhamnulose kinase</fullName>
    </alternativeName>
</protein>
<feature type="chain" id="PRO_1000146538" description="Rhamnulokinase">
    <location>
        <begin position="1"/>
        <end position="489"/>
    </location>
</feature>
<feature type="active site" description="Proton acceptor" evidence="1">
    <location>
        <position position="237"/>
    </location>
</feature>
<feature type="binding site" evidence="1">
    <location>
        <begin position="13"/>
        <end position="17"/>
    </location>
    <ligand>
        <name>ATP</name>
        <dbReference type="ChEBI" id="CHEBI:30616"/>
    </ligand>
</feature>
<feature type="binding site" evidence="1">
    <location>
        <position position="83"/>
    </location>
    <ligand>
        <name>substrate</name>
    </ligand>
</feature>
<feature type="binding site" evidence="1">
    <location>
        <begin position="236"/>
        <end position="238"/>
    </location>
    <ligand>
        <name>substrate</name>
    </ligand>
</feature>
<feature type="binding site" evidence="1">
    <location>
        <position position="259"/>
    </location>
    <ligand>
        <name>ATP</name>
        <dbReference type="ChEBI" id="CHEBI:30616"/>
    </ligand>
</feature>
<feature type="binding site" evidence="1">
    <location>
        <position position="296"/>
    </location>
    <ligand>
        <name>substrate</name>
    </ligand>
</feature>
<feature type="binding site" evidence="1">
    <location>
        <position position="304"/>
    </location>
    <ligand>
        <name>ATP</name>
        <dbReference type="ChEBI" id="CHEBI:30616"/>
    </ligand>
</feature>
<feature type="binding site" evidence="1">
    <location>
        <position position="402"/>
    </location>
    <ligand>
        <name>ATP</name>
        <dbReference type="ChEBI" id="CHEBI:30616"/>
    </ligand>
</feature>
<feature type="disulfide bond" evidence="1">
    <location>
        <begin position="68"/>
        <end position="222"/>
    </location>
</feature>
<feature type="disulfide bond" evidence="1">
    <location>
        <begin position="353"/>
        <end position="370"/>
    </location>
</feature>
<feature type="disulfide bond" evidence="1">
    <location>
        <begin position="413"/>
        <end position="417"/>
    </location>
</feature>
<gene>
    <name evidence="1" type="primary">rhaB</name>
    <name type="ordered locus">ECS88_4351</name>
</gene>
<reference key="1">
    <citation type="journal article" date="2009" name="PLoS Genet.">
        <title>Organised genome dynamics in the Escherichia coli species results in highly diverse adaptive paths.</title>
        <authorList>
            <person name="Touchon M."/>
            <person name="Hoede C."/>
            <person name="Tenaillon O."/>
            <person name="Barbe V."/>
            <person name="Baeriswyl S."/>
            <person name="Bidet P."/>
            <person name="Bingen E."/>
            <person name="Bonacorsi S."/>
            <person name="Bouchier C."/>
            <person name="Bouvet O."/>
            <person name="Calteau A."/>
            <person name="Chiapello H."/>
            <person name="Clermont O."/>
            <person name="Cruveiller S."/>
            <person name="Danchin A."/>
            <person name="Diard M."/>
            <person name="Dossat C."/>
            <person name="Karoui M.E."/>
            <person name="Frapy E."/>
            <person name="Garry L."/>
            <person name="Ghigo J.M."/>
            <person name="Gilles A.M."/>
            <person name="Johnson J."/>
            <person name="Le Bouguenec C."/>
            <person name="Lescat M."/>
            <person name="Mangenot S."/>
            <person name="Martinez-Jehanne V."/>
            <person name="Matic I."/>
            <person name="Nassif X."/>
            <person name="Oztas S."/>
            <person name="Petit M.A."/>
            <person name="Pichon C."/>
            <person name="Rouy Z."/>
            <person name="Ruf C.S."/>
            <person name="Schneider D."/>
            <person name="Tourret J."/>
            <person name="Vacherie B."/>
            <person name="Vallenet D."/>
            <person name="Medigue C."/>
            <person name="Rocha E.P.C."/>
            <person name="Denamur E."/>
        </authorList>
    </citation>
    <scope>NUCLEOTIDE SEQUENCE [LARGE SCALE GENOMIC DNA]</scope>
    <source>
        <strain>S88 / ExPEC</strain>
    </source>
</reference>